<sequence>MAPSRTSTVKNKNASKHAANGSGIRNSKTVSRAQSDGVSKSKGKKATQSKGAPPKPQKQGNKMATLKKKRRVYTEKELGIPSLNMITPVGVEKPKGKKKGKVFVDDRESMMTILAMVNADKDGQIESKMMRARQMEEIREARKAEHERKQEMQKNKLKGMKDDLRKKRKRGGDDEGDNVKGEALAGTKPLKPKKKTVSFA</sequence>
<organism>
    <name type="scientific">Sclerotinia sclerotiorum (strain ATCC 18683 / 1980 / Ss-1)</name>
    <name type="common">White mold</name>
    <name type="synonym">Whetzelinia sclerotiorum</name>
    <dbReference type="NCBI Taxonomy" id="665079"/>
    <lineage>
        <taxon>Eukaryota</taxon>
        <taxon>Fungi</taxon>
        <taxon>Dikarya</taxon>
        <taxon>Ascomycota</taxon>
        <taxon>Pezizomycotina</taxon>
        <taxon>Leotiomycetes</taxon>
        <taxon>Helotiales</taxon>
        <taxon>Sclerotiniaceae</taxon>
        <taxon>Sclerotinia</taxon>
    </lineage>
</organism>
<keyword id="KW-0175">Coiled coil</keyword>
<keyword id="KW-0509">mRNA transport</keyword>
<keyword id="KW-0539">Nucleus</keyword>
<keyword id="KW-1185">Reference proteome</keyword>
<keyword id="KW-0690">Ribosome biogenesis</keyword>
<keyword id="KW-0813">Transport</keyword>
<gene>
    <name type="primary">loc1</name>
    <name type="ORF">SS1G_00436</name>
</gene>
<dbReference type="EMBL" id="CH476621">
    <property type="protein sequence ID" value="EDN91036.1"/>
    <property type="molecule type" value="Genomic_DNA"/>
</dbReference>
<dbReference type="RefSeq" id="XP_001598350.1">
    <property type="nucleotide sequence ID" value="XM_001598300.1"/>
</dbReference>
<dbReference type="SMR" id="A7E564"/>
<dbReference type="FunCoup" id="A7E564">
    <property type="interactions" value="313"/>
</dbReference>
<dbReference type="STRING" id="665079.A7E564"/>
<dbReference type="EnsemblFungi" id="EDN91036">
    <property type="protein sequence ID" value="EDN91036"/>
    <property type="gene ID" value="SS1G_00436"/>
</dbReference>
<dbReference type="GeneID" id="5494641"/>
<dbReference type="KEGG" id="ssl:SS1G_00436"/>
<dbReference type="VEuPathDB" id="FungiDB:sscle_03g027120"/>
<dbReference type="eggNOG" id="ENOG502RY6R">
    <property type="taxonomic scope" value="Eukaryota"/>
</dbReference>
<dbReference type="HOGENOM" id="CLU_096593_0_0_1"/>
<dbReference type="InParanoid" id="A7E564"/>
<dbReference type="OMA" id="RESMNTI"/>
<dbReference type="OrthoDB" id="1743802at2759"/>
<dbReference type="Proteomes" id="UP000001312">
    <property type="component" value="Unassembled WGS sequence"/>
</dbReference>
<dbReference type="GO" id="GO:0005730">
    <property type="term" value="C:nucleolus"/>
    <property type="evidence" value="ECO:0000318"/>
    <property type="project" value="GO_Central"/>
</dbReference>
<dbReference type="GO" id="GO:0030687">
    <property type="term" value="C:preribosome, large subunit precursor"/>
    <property type="evidence" value="ECO:0000318"/>
    <property type="project" value="GO_Central"/>
</dbReference>
<dbReference type="GO" id="GO:0003729">
    <property type="term" value="F:mRNA binding"/>
    <property type="evidence" value="ECO:0000318"/>
    <property type="project" value="GO_Central"/>
</dbReference>
<dbReference type="GO" id="GO:0008298">
    <property type="term" value="P:intracellular mRNA localization"/>
    <property type="evidence" value="ECO:0000318"/>
    <property type="project" value="GO_Central"/>
</dbReference>
<dbReference type="GO" id="GO:0051028">
    <property type="term" value="P:mRNA transport"/>
    <property type="evidence" value="ECO:0007669"/>
    <property type="project" value="UniProtKB-KW"/>
</dbReference>
<dbReference type="GO" id="GO:0042273">
    <property type="term" value="P:ribosomal large subunit biogenesis"/>
    <property type="evidence" value="ECO:0000318"/>
    <property type="project" value="GO_Central"/>
</dbReference>
<dbReference type="InterPro" id="IPR037650">
    <property type="entry name" value="Loc1"/>
</dbReference>
<dbReference type="PANTHER" id="PTHR28028">
    <property type="entry name" value="60S RIBOSOMAL SUBUNIT ASSEMBLY/EXPORT PROTEIN LOC1"/>
    <property type="match status" value="1"/>
</dbReference>
<dbReference type="PANTHER" id="PTHR28028:SF1">
    <property type="entry name" value="60S RIBOSOMAL SUBUNIT ASSEMBLY_EXPORT PROTEIN LOC1"/>
    <property type="match status" value="1"/>
</dbReference>
<proteinExistence type="inferred from homology"/>
<evidence type="ECO:0000250" key="1"/>
<evidence type="ECO:0000255" key="2"/>
<evidence type="ECO:0000256" key="3">
    <source>
        <dbReference type="SAM" id="MobiDB-lite"/>
    </source>
</evidence>
<evidence type="ECO:0000305" key="4"/>
<feature type="chain" id="PRO_0000308803" description="60S ribosomal subunit assembly/export protein loc1">
    <location>
        <begin position="1"/>
        <end position="200"/>
    </location>
</feature>
<feature type="region of interest" description="Disordered" evidence="3">
    <location>
        <begin position="1"/>
        <end position="73"/>
    </location>
</feature>
<feature type="region of interest" description="Disordered" evidence="3">
    <location>
        <begin position="138"/>
        <end position="200"/>
    </location>
</feature>
<feature type="coiled-coil region" evidence="2">
    <location>
        <begin position="130"/>
        <end position="170"/>
    </location>
</feature>
<feature type="compositionally biased region" description="Polar residues" evidence="3">
    <location>
        <begin position="1"/>
        <end position="12"/>
    </location>
</feature>
<feature type="compositionally biased region" description="Polar residues" evidence="3">
    <location>
        <begin position="23"/>
        <end position="38"/>
    </location>
</feature>
<feature type="compositionally biased region" description="Basic and acidic residues" evidence="3">
    <location>
        <begin position="138"/>
        <end position="180"/>
    </location>
</feature>
<feature type="compositionally biased region" description="Basic residues" evidence="3">
    <location>
        <begin position="190"/>
        <end position="200"/>
    </location>
</feature>
<name>LOC1_SCLS1</name>
<protein>
    <recommendedName>
        <fullName>60S ribosomal subunit assembly/export protein loc1</fullName>
    </recommendedName>
</protein>
<comment type="function">
    <text evidence="1">Required for efficient assembly and nuclear export of the 60S ribosomal subunit.</text>
</comment>
<comment type="subunit">
    <text evidence="1">Component of the 66S pre-ribosomal particle.</text>
</comment>
<comment type="subcellular location">
    <subcellularLocation>
        <location evidence="1">Nucleus</location>
        <location evidence="1">Nucleolus</location>
    </subcellularLocation>
</comment>
<comment type="similarity">
    <text evidence="4">Belongs to the LOC1 family.</text>
</comment>
<reference key="1">
    <citation type="journal article" date="2011" name="PLoS Genet.">
        <title>Genomic analysis of the necrotrophic fungal pathogens Sclerotinia sclerotiorum and Botrytis cinerea.</title>
        <authorList>
            <person name="Amselem J."/>
            <person name="Cuomo C.A."/>
            <person name="van Kan J.A.L."/>
            <person name="Viaud M."/>
            <person name="Benito E.P."/>
            <person name="Couloux A."/>
            <person name="Coutinho P.M."/>
            <person name="de Vries R.P."/>
            <person name="Dyer P.S."/>
            <person name="Fillinger S."/>
            <person name="Fournier E."/>
            <person name="Gout L."/>
            <person name="Hahn M."/>
            <person name="Kohn L."/>
            <person name="Lapalu N."/>
            <person name="Plummer K.M."/>
            <person name="Pradier J.-M."/>
            <person name="Quevillon E."/>
            <person name="Sharon A."/>
            <person name="Simon A."/>
            <person name="ten Have A."/>
            <person name="Tudzynski B."/>
            <person name="Tudzynski P."/>
            <person name="Wincker P."/>
            <person name="Andrew M."/>
            <person name="Anthouard V."/>
            <person name="Beever R.E."/>
            <person name="Beffa R."/>
            <person name="Benoit I."/>
            <person name="Bouzid O."/>
            <person name="Brault B."/>
            <person name="Chen Z."/>
            <person name="Choquer M."/>
            <person name="Collemare J."/>
            <person name="Cotton P."/>
            <person name="Danchin E.G."/>
            <person name="Da Silva C."/>
            <person name="Gautier A."/>
            <person name="Giraud C."/>
            <person name="Giraud T."/>
            <person name="Gonzalez C."/>
            <person name="Grossetete S."/>
            <person name="Gueldener U."/>
            <person name="Henrissat B."/>
            <person name="Howlett B.J."/>
            <person name="Kodira C."/>
            <person name="Kretschmer M."/>
            <person name="Lappartient A."/>
            <person name="Leroch M."/>
            <person name="Levis C."/>
            <person name="Mauceli E."/>
            <person name="Neuveglise C."/>
            <person name="Oeser B."/>
            <person name="Pearson M."/>
            <person name="Poulain J."/>
            <person name="Poussereau N."/>
            <person name="Quesneville H."/>
            <person name="Rascle C."/>
            <person name="Schumacher J."/>
            <person name="Segurens B."/>
            <person name="Sexton A."/>
            <person name="Silva E."/>
            <person name="Sirven C."/>
            <person name="Soanes D.M."/>
            <person name="Talbot N.J."/>
            <person name="Templeton M."/>
            <person name="Yandava C."/>
            <person name="Yarden O."/>
            <person name="Zeng Q."/>
            <person name="Rollins J.A."/>
            <person name="Lebrun M.-H."/>
            <person name="Dickman M."/>
        </authorList>
    </citation>
    <scope>NUCLEOTIDE SEQUENCE [LARGE SCALE GENOMIC DNA]</scope>
    <source>
        <strain>ATCC 18683 / 1980 / Ss-1</strain>
    </source>
</reference>
<accession>A7E564</accession>